<reference key="1">
    <citation type="journal article" date="2000" name="Curr. Genet.">
        <title>Isolation and RNA-binding analysis of NAD+ -isocitrate dehydrogenases from Kluyveromyces lactis and Schizosaccharomyces pombe.</title>
        <authorList>
            <person name="Elzinga S.D.J."/>
            <person name="van Oosterum K."/>
            <person name="Maat C."/>
            <person name="Grivell L.A."/>
            <person name="van der Spek H."/>
        </authorList>
    </citation>
    <scope>NUCLEOTIDE SEQUENCE [GENOMIC DNA]</scope>
    <source>
        <strain>ATCC MYA-539 / JBD100</strain>
    </source>
</reference>
<reference key="2">
    <citation type="journal article" date="2004" name="Nature">
        <title>Genome evolution in yeasts.</title>
        <authorList>
            <person name="Dujon B."/>
            <person name="Sherman D."/>
            <person name="Fischer G."/>
            <person name="Durrens P."/>
            <person name="Casaregola S."/>
            <person name="Lafontaine I."/>
            <person name="de Montigny J."/>
            <person name="Marck C."/>
            <person name="Neuveglise C."/>
            <person name="Talla E."/>
            <person name="Goffard N."/>
            <person name="Frangeul L."/>
            <person name="Aigle M."/>
            <person name="Anthouard V."/>
            <person name="Babour A."/>
            <person name="Barbe V."/>
            <person name="Barnay S."/>
            <person name="Blanchin S."/>
            <person name="Beckerich J.-M."/>
            <person name="Beyne E."/>
            <person name="Bleykasten C."/>
            <person name="Boisrame A."/>
            <person name="Boyer J."/>
            <person name="Cattolico L."/>
            <person name="Confanioleri F."/>
            <person name="de Daruvar A."/>
            <person name="Despons L."/>
            <person name="Fabre E."/>
            <person name="Fairhead C."/>
            <person name="Ferry-Dumazet H."/>
            <person name="Groppi A."/>
            <person name="Hantraye F."/>
            <person name="Hennequin C."/>
            <person name="Jauniaux N."/>
            <person name="Joyet P."/>
            <person name="Kachouri R."/>
            <person name="Kerrest A."/>
            <person name="Koszul R."/>
            <person name="Lemaire M."/>
            <person name="Lesur I."/>
            <person name="Ma L."/>
            <person name="Muller H."/>
            <person name="Nicaud J.-M."/>
            <person name="Nikolski M."/>
            <person name="Oztas S."/>
            <person name="Ozier-Kalogeropoulos O."/>
            <person name="Pellenz S."/>
            <person name="Potier S."/>
            <person name="Richard G.-F."/>
            <person name="Straub M.-L."/>
            <person name="Suleau A."/>
            <person name="Swennen D."/>
            <person name="Tekaia F."/>
            <person name="Wesolowski-Louvel M."/>
            <person name="Westhof E."/>
            <person name="Wirth B."/>
            <person name="Zeniou-Meyer M."/>
            <person name="Zivanovic Y."/>
            <person name="Bolotin-Fukuhara M."/>
            <person name="Thierry A."/>
            <person name="Bouchier C."/>
            <person name="Caudron B."/>
            <person name="Scarpelli C."/>
            <person name="Gaillardin C."/>
            <person name="Weissenbach J."/>
            <person name="Wincker P."/>
            <person name="Souciet J.-L."/>
        </authorList>
    </citation>
    <scope>NUCLEOTIDE SEQUENCE [LARGE SCALE GENOMIC DNA]</scope>
    <source>
        <strain>ATCC 8585 / CBS 2359 / DSM 70799 / NBRC 1267 / NRRL Y-1140 / WM37</strain>
    </source>
</reference>
<sequence length="368" mass="39579">MFRQSIVKQSCRFLATKKQPSIGRYTGKPNPKTGKYTVSFIEGDGVGPEISKSVKAIFSAAKVPIEWESCDVSPIFVNGLTTIPDPAVASINKNLIALKGPLATPIGKGHRSLNLTLRKTFGLFANVRPAKSIEGYKTTYENVNLVLIRENTEGEYSGIEHVVAPGVVQSIKLITQDASERVIRYAFEYARAVDRSKVLVVHKSTIQRLADGLFVDVAKKLSSEYPDIELQTELLDNTVLKTVQHPEAYDDVVVVCPNLYGDILSDLNSGLSAGSLGLTPSANIGHTVSIFEAVHGSAPDIAGQNKANPTALLLSSVMMLNHMGLTEHADKIEKAVLTTIASDAKNRTGDLGGSASTSSFTDAVIERL</sequence>
<evidence type="ECO:0000250" key="1"/>
<evidence type="ECO:0000250" key="2">
    <source>
        <dbReference type="UniProtKB" id="P50213"/>
    </source>
</evidence>
<evidence type="ECO:0000305" key="3"/>
<dbReference type="EC" id="1.1.1.41"/>
<dbReference type="EMBL" id="AF045154">
    <property type="protein sequence ID" value="AAC69609.1"/>
    <property type="molecule type" value="Genomic_DNA"/>
</dbReference>
<dbReference type="EMBL" id="CR382125">
    <property type="protein sequence ID" value="CAG99173.1"/>
    <property type="molecule type" value="Genomic_DNA"/>
</dbReference>
<dbReference type="RefSeq" id="XP_454086.1">
    <property type="nucleotide sequence ID" value="XM_454086.1"/>
</dbReference>
<dbReference type="SMR" id="O94230"/>
<dbReference type="FunCoup" id="O94230">
    <property type="interactions" value="952"/>
</dbReference>
<dbReference type="STRING" id="284590.O94230"/>
<dbReference type="PaxDb" id="284590-O94230"/>
<dbReference type="KEGG" id="kla:KLLA0_E03125g"/>
<dbReference type="eggNOG" id="KOG0785">
    <property type="taxonomic scope" value="Eukaryota"/>
</dbReference>
<dbReference type="HOGENOM" id="CLU_031953_0_1_1"/>
<dbReference type="InParanoid" id="O94230"/>
<dbReference type="OMA" id="VRPCRYY"/>
<dbReference type="Proteomes" id="UP000000598">
    <property type="component" value="Chromosome E"/>
</dbReference>
<dbReference type="GO" id="GO:0005739">
    <property type="term" value="C:mitochondrion"/>
    <property type="evidence" value="ECO:0007669"/>
    <property type="project" value="UniProtKB-SubCell"/>
</dbReference>
<dbReference type="GO" id="GO:0004449">
    <property type="term" value="F:isocitrate dehydrogenase (NAD+) activity"/>
    <property type="evidence" value="ECO:0007669"/>
    <property type="project" value="UniProtKB-EC"/>
</dbReference>
<dbReference type="GO" id="GO:0000287">
    <property type="term" value="F:magnesium ion binding"/>
    <property type="evidence" value="ECO:0007669"/>
    <property type="project" value="InterPro"/>
</dbReference>
<dbReference type="GO" id="GO:0051287">
    <property type="term" value="F:NAD binding"/>
    <property type="evidence" value="ECO:0007669"/>
    <property type="project" value="InterPro"/>
</dbReference>
<dbReference type="GO" id="GO:0006102">
    <property type="term" value="P:isocitrate metabolic process"/>
    <property type="evidence" value="ECO:0007669"/>
    <property type="project" value="TreeGrafter"/>
</dbReference>
<dbReference type="GO" id="GO:0006099">
    <property type="term" value="P:tricarboxylic acid cycle"/>
    <property type="evidence" value="ECO:0007669"/>
    <property type="project" value="UniProtKB-KW"/>
</dbReference>
<dbReference type="FunFam" id="3.40.718.10:FF:000003">
    <property type="entry name" value="Isocitrate dehydrogenase [NAD] subunit, mitochondrial"/>
    <property type="match status" value="1"/>
</dbReference>
<dbReference type="Gene3D" id="3.40.718.10">
    <property type="entry name" value="Isopropylmalate Dehydrogenase"/>
    <property type="match status" value="1"/>
</dbReference>
<dbReference type="InterPro" id="IPR019818">
    <property type="entry name" value="IsoCit/isopropylmalate_DH_CS"/>
</dbReference>
<dbReference type="InterPro" id="IPR004434">
    <property type="entry name" value="Isocitrate_DH_NAD"/>
</dbReference>
<dbReference type="InterPro" id="IPR024084">
    <property type="entry name" value="IsoPropMal-DH-like_dom"/>
</dbReference>
<dbReference type="NCBIfam" id="TIGR00175">
    <property type="entry name" value="mito_nad_idh"/>
    <property type="match status" value="1"/>
</dbReference>
<dbReference type="PANTHER" id="PTHR11835">
    <property type="entry name" value="DECARBOXYLATING DEHYDROGENASES-ISOCITRATE, ISOPROPYLMALATE, TARTRATE"/>
    <property type="match status" value="1"/>
</dbReference>
<dbReference type="PANTHER" id="PTHR11835:SF34">
    <property type="entry name" value="ISOCITRATE DEHYDROGENASE [NAD] SUBUNIT ALPHA, MITOCHONDRIAL"/>
    <property type="match status" value="1"/>
</dbReference>
<dbReference type="Pfam" id="PF00180">
    <property type="entry name" value="Iso_dh"/>
    <property type="match status" value="1"/>
</dbReference>
<dbReference type="SMART" id="SM01329">
    <property type="entry name" value="Iso_dh"/>
    <property type="match status" value="1"/>
</dbReference>
<dbReference type="SUPFAM" id="SSF53659">
    <property type="entry name" value="Isocitrate/Isopropylmalate dehydrogenase-like"/>
    <property type="match status" value="1"/>
</dbReference>
<dbReference type="PROSITE" id="PS00470">
    <property type="entry name" value="IDH_IMDH"/>
    <property type="match status" value="1"/>
</dbReference>
<proteinExistence type="inferred from homology"/>
<keyword id="KW-0460">Magnesium</keyword>
<keyword id="KW-0464">Manganese</keyword>
<keyword id="KW-0479">Metal-binding</keyword>
<keyword id="KW-0496">Mitochondrion</keyword>
<keyword id="KW-0520">NAD</keyword>
<keyword id="KW-0560">Oxidoreductase</keyword>
<keyword id="KW-1185">Reference proteome</keyword>
<keyword id="KW-0809">Transit peptide</keyword>
<keyword id="KW-0816">Tricarboxylic acid cycle</keyword>
<gene>
    <name type="primary">IDH2</name>
    <name type="ordered locus">KLLA0E03058g</name>
</gene>
<name>IDH2_KLULA</name>
<accession>O94230</accession>
<protein>
    <recommendedName>
        <fullName>Isocitrate dehydrogenase [NAD] subunit 2, mitochondrial</fullName>
        <ecNumber>1.1.1.41</ecNumber>
    </recommendedName>
    <alternativeName>
        <fullName>Isocitric dehydrogenase</fullName>
    </alternativeName>
    <alternativeName>
        <fullName>NAD(+)-specific ICDH</fullName>
    </alternativeName>
</protein>
<comment type="function">
    <text evidence="1">Performs an essential role in the oxidative function of the citric acid cycle.</text>
</comment>
<comment type="catalytic activity">
    <reaction>
        <text>D-threo-isocitrate + NAD(+) = 2-oxoglutarate + CO2 + NADH</text>
        <dbReference type="Rhea" id="RHEA:23632"/>
        <dbReference type="ChEBI" id="CHEBI:15562"/>
        <dbReference type="ChEBI" id="CHEBI:16526"/>
        <dbReference type="ChEBI" id="CHEBI:16810"/>
        <dbReference type="ChEBI" id="CHEBI:57540"/>
        <dbReference type="ChEBI" id="CHEBI:57945"/>
        <dbReference type="EC" id="1.1.1.41"/>
    </reaction>
</comment>
<comment type="cofactor">
    <cofactor evidence="1">
        <name>Mg(2+)</name>
        <dbReference type="ChEBI" id="CHEBI:18420"/>
    </cofactor>
    <cofactor evidence="1">
        <name>Mn(2+)</name>
        <dbReference type="ChEBI" id="CHEBI:29035"/>
    </cofactor>
    <text evidence="1">Binds 1 Mg(2+) or Mn(2+) ion per subunit.</text>
</comment>
<comment type="subunit">
    <text evidence="1">Octamer of two non-identical subunits IDH1 and IDH2.</text>
</comment>
<comment type="subcellular location">
    <subcellularLocation>
        <location evidence="1">Mitochondrion</location>
    </subcellularLocation>
</comment>
<comment type="similarity">
    <text evidence="3">Belongs to the isocitrate and isopropylmalate dehydrogenases family.</text>
</comment>
<feature type="transit peptide" description="Mitochondrion" evidence="1">
    <location>
        <begin position="1"/>
        <end position="14"/>
    </location>
</feature>
<feature type="chain" id="PRO_0000014432" description="Isocitrate dehydrogenase [NAD] subunit 2, mitochondrial">
    <location>
        <begin position="15"/>
        <end position="368"/>
    </location>
</feature>
<feature type="binding site" evidence="1">
    <location>
        <position position="118"/>
    </location>
    <ligand>
        <name>substrate</name>
    </ligand>
</feature>
<feature type="binding site" evidence="1">
    <location>
        <position position="128"/>
    </location>
    <ligand>
        <name>substrate</name>
    </ligand>
</feature>
<feature type="binding site" evidence="1">
    <location>
        <position position="149"/>
    </location>
    <ligand>
        <name>substrate</name>
    </ligand>
</feature>
<feature type="binding site" evidence="2">
    <location>
        <position position="236"/>
    </location>
    <ligand>
        <name>Mg(2+)</name>
        <dbReference type="ChEBI" id="CHEBI:18420"/>
    </ligand>
</feature>
<feature type="binding site" evidence="1">
    <location>
        <position position="236"/>
    </location>
    <ligand>
        <name>substrate</name>
    </ligand>
</feature>
<feature type="binding site" evidence="2">
    <location>
        <position position="262"/>
    </location>
    <ligand>
        <name>Mg(2+)</name>
        <dbReference type="ChEBI" id="CHEBI:18420"/>
    </ligand>
</feature>
<feature type="binding site" evidence="2">
    <location>
        <position position="266"/>
    </location>
    <ligand>
        <name>Mg(2+)</name>
        <dbReference type="ChEBI" id="CHEBI:18420"/>
    </ligand>
</feature>
<feature type="site" description="Critical for catalysis" evidence="1">
    <location>
        <position position="156"/>
    </location>
</feature>
<feature type="site" description="Critical for catalysis" evidence="1">
    <location>
        <position position="203"/>
    </location>
</feature>
<organism>
    <name type="scientific">Kluyveromyces lactis (strain ATCC 8585 / CBS 2359 / DSM 70799 / NBRC 1267 / NRRL Y-1140 / WM37)</name>
    <name type="common">Yeast</name>
    <name type="synonym">Candida sphaerica</name>
    <dbReference type="NCBI Taxonomy" id="284590"/>
    <lineage>
        <taxon>Eukaryota</taxon>
        <taxon>Fungi</taxon>
        <taxon>Dikarya</taxon>
        <taxon>Ascomycota</taxon>
        <taxon>Saccharomycotina</taxon>
        <taxon>Saccharomycetes</taxon>
        <taxon>Saccharomycetales</taxon>
        <taxon>Saccharomycetaceae</taxon>
        <taxon>Kluyveromyces</taxon>
    </lineage>
</organism>